<accession>Q9D8P4</accession>
<accession>Q91VR0</accession>
<comment type="subunit">
    <text evidence="2">Component of the mitochondrial ribosome large subunit (39S) which comprises a 16S rRNA and about 50 distinct proteins.</text>
</comment>
<comment type="subcellular location">
    <subcellularLocation>
        <location evidence="2">Mitochondrion</location>
    </subcellularLocation>
</comment>
<comment type="alternative products">
    <event type="alternative splicing"/>
    <isoform>
        <id>Q9D8P4-1</id>
        <name>1</name>
        <sequence type="displayed"/>
    </isoform>
    <isoform>
        <id>Q9D8P4-2</id>
        <name>2</name>
        <sequence type="described" ref="VSP_018590 VSP_018591"/>
    </isoform>
</comment>
<comment type="similarity">
    <text evidence="4">Belongs to the bacterial ribosomal protein bL17 family.</text>
</comment>
<proteinExistence type="evidence at protein level"/>
<sequence>MRLSLAAAISHGRVYRRLGLGPESRIHLLRNLLTGLVRHERIEATWARADEMRGYAEKLIDYGKLGDTNERAMRMADFWLTEKDLIPKLFKVLAPRFQGQNGNYTRMLQIPNRKEQDRAKMAVIEYKGNYLPPLPLPHRDSNLTLLNQLLLGLQQDLHHNQDASLHSSCTVQTPKT</sequence>
<dbReference type="EMBL" id="AK007828">
    <property type="protein sequence ID" value="BAB25288.1"/>
    <property type="molecule type" value="mRNA"/>
</dbReference>
<dbReference type="EMBL" id="AK144092">
    <property type="protein sequence ID" value="BAE25695.1"/>
    <property type="molecule type" value="mRNA"/>
</dbReference>
<dbReference type="EMBL" id="AK147957">
    <property type="protein sequence ID" value="BAE28251.1"/>
    <property type="molecule type" value="mRNA"/>
</dbReference>
<dbReference type="EMBL" id="BC010718">
    <property type="protein sequence ID" value="AAH10718.1"/>
    <property type="molecule type" value="mRNA"/>
</dbReference>
<dbReference type="CCDS" id="CCDS21662.1">
    <molecule id="Q9D8P4-1"/>
</dbReference>
<dbReference type="RefSeq" id="NP_079577.1">
    <molecule id="Q9D8P4-1"/>
    <property type="nucleotide sequence ID" value="NM_025301.2"/>
</dbReference>
<dbReference type="SMR" id="Q9D8P4"/>
<dbReference type="BioGRID" id="205204">
    <property type="interactions" value="3"/>
</dbReference>
<dbReference type="ComplexPortal" id="CPX-5302">
    <property type="entry name" value="39S mitochondrial large ribosomal subunit"/>
</dbReference>
<dbReference type="FunCoup" id="Q9D8P4">
    <property type="interactions" value="2365"/>
</dbReference>
<dbReference type="STRING" id="10090.ENSMUSP00000117971"/>
<dbReference type="GlyGen" id="Q9D8P4">
    <property type="glycosylation" value="1 site, 1 O-linked glycan (1 site)"/>
</dbReference>
<dbReference type="iPTMnet" id="Q9D8P4"/>
<dbReference type="PhosphoSitePlus" id="Q9D8P4"/>
<dbReference type="SwissPalm" id="Q9D8P4"/>
<dbReference type="PaxDb" id="10090-ENSMUSP00000117971"/>
<dbReference type="PeptideAtlas" id="Q9D8P4"/>
<dbReference type="ProteomicsDB" id="299906">
    <molecule id="Q9D8P4-1"/>
</dbReference>
<dbReference type="ProteomicsDB" id="299907">
    <molecule id="Q9D8P4-2"/>
</dbReference>
<dbReference type="Pumba" id="Q9D8P4"/>
<dbReference type="Antibodypedia" id="64019">
    <property type="antibodies" value="54 antibodies from 19 providers"/>
</dbReference>
<dbReference type="DNASU" id="27397"/>
<dbReference type="Ensembl" id="ENSMUST00000033170.7">
    <molecule id="Q9D8P4-2"/>
    <property type="protein sequence ID" value="ENSMUSP00000147523.2"/>
    <property type="gene ID" value="ENSMUSG00000030879.11"/>
</dbReference>
<dbReference type="Ensembl" id="ENSMUST00000124482.3">
    <molecule id="Q9D8P4-1"/>
    <property type="protein sequence ID" value="ENSMUSP00000117971.2"/>
    <property type="gene ID" value="ENSMUSG00000030879.11"/>
</dbReference>
<dbReference type="GeneID" id="27397"/>
<dbReference type="KEGG" id="mmu:27397"/>
<dbReference type="UCSC" id="uc009izl.1">
    <molecule id="Q9D8P4-1"/>
    <property type="organism name" value="mouse"/>
</dbReference>
<dbReference type="UCSC" id="uc009izm.1">
    <molecule id="Q9D8P4-2"/>
    <property type="organism name" value="mouse"/>
</dbReference>
<dbReference type="AGR" id="MGI:1351608"/>
<dbReference type="CTD" id="63875"/>
<dbReference type="MGI" id="MGI:1351608">
    <property type="gene designation" value="Mrpl17"/>
</dbReference>
<dbReference type="VEuPathDB" id="HostDB:ENSMUSG00000030879"/>
<dbReference type="eggNOG" id="KOG3280">
    <property type="taxonomic scope" value="Eukaryota"/>
</dbReference>
<dbReference type="GeneTree" id="ENSGT00390000010698"/>
<dbReference type="HOGENOM" id="CLU_074407_3_2_1"/>
<dbReference type="InParanoid" id="Q9D8P4"/>
<dbReference type="OMA" id="HKPTMEM"/>
<dbReference type="OrthoDB" id="275000at2759"/>
<dbReference type="PhylomeDB" id="Q9D8P4"/>
<dbReference type="TreeFam" id="TF105844"/>
<dbReference type="Reactome" id="R-MMU-5389840">
    <property type="pathway name" value="Mitochondrial translation elongation"/>
</dbReference>
<dbReference type="Reactome" id="R-MMU-5419276">
    <property type="pathway name" value="Mitochondrial translation termination"/>
</dbReference>
<dbReference type="BioGRID-ORCS" id="27397">
    <property type="hits" value="28 hits in 83 CRISPR screens"/>
</dbReference>
<dbReference type="ChiTaRS" id="Mrpl17">
    <property type="organism name" value="mouse"/>
</dbReference>
<dbReference type="PRO" id="PR:Q9D8P4"/>
<dbReference type="Proteomes" id="UP000000589">
    <property type="component" value="Chromosome 7"/>
</dbReference>
<dbReference type="RNAct" id="Q9D8P4">
    <property type="molecule type" value="protein"/>
</dbReference>
<dbReference type="Bgee" id="ENSMUSG00000030879">
    <property type="expression patterns" value="Expressed in embryonic cell in blastocyst and 269 other cell types or tissues"/>
</dbReference>
<dbReference type="ExpressionAtlas" id="Q9D8P4">
    <property type="expression patterns" value="baseline and differential"/>
</dbReference>
<dbReference type="GO" id="GO:0005743">
    <property type="term" value="C:mitochondrial inner membrane"/>
    <property type="evidence" value="ECO:0007005"/>
    <property type="project" value="MGI"/>
</dbReference>
<dbReference type="GO" id="GO:0005762">
    <property type="term" value="C:mitochondrial large ribosomal subunit"/>
    <property type="evidence" value="ECO:0000250"/>
    <property type="project" value="UniProtKB"/>
</dbReference>
<dbReference type="GO" id="GO:0005739">
    <property type="term" value="C:mitochondrion"/>
    <property type="evidence" value="ECO:0007005"/>
    <property type="project" value="MGI"/>
</dbReference>
<dbReference type="GO" id="GO:0019904">
    <property type="term" value="F:protein domain specific binding"/>
    <property type="evidence" value="ECO:0007669"/>
    <property type="project" value="Ensembl"/>
</dbReference>
<dbReference type="GO" id="GO:0003735">
    <property type="term" value="F:structural constituent of ribosome"/>
    <property type="evidence" value="ECO:0000247"/>
    <property type="project" value="MGI"/>
</dbReference>
<dbReference type="GO" id="GO:0000002">
    <property type="term" value="P:mitochondrial genome maintenance"/>
    <property type="evidence" value="ECO:0000304"/>
    <property type="project" value="MGI"/>
</dbReference>
<dbReference type="GO" id="GO:0032543">
    <property type="term" value="P:mitochondrial translation"/>
    <property type="evidence" value="ECO:0000303"/>
    <property type="project" value="ComplexPortal"/>
</dbReference>
<dbReference type="GO" id="GO:0006412">
    <property type="term" value="P:translation"/>
    <property type="evidence" value="ECO:0000247"/>
    <property type="project" value="MGI"/>
</dbReference>
<dbReference type="FunFam" id="3.90.1030.10:FF:000007">
    <property type="entry name" value="39S ribosomal protein L17, mitochondrial"/>
    <property type="match status" value="1"/>
</dbReference>
<dbReference type="Gene3D" id="3.90.1030.10">
    <property type="entry name" value="Ribosomal protein L17"/>
    <property type="match status" value="1"/>
</dbReference>
<dbReference type="InterPro" id="IPR000456">
    <property type="entry name" value="Ribosomal_bL17"/>
</dbReference>
<dbReference type="InterPro" id="IPR036373">
    <property type="entry name" value="Ribosomal_bL17_sf"/>
</dbReference>
<dbReference type="NCBIfam" id="TIGR00059">
    <property type="entry name" value="L17"/>
    <property type="match status" value="1"/>
</dbReference>
<dbReference type="PANTHER" id="PTHR14413:SF16">
    <property type="entry name" value="LARGE RIBOSOMAL SUBUNIT PROTEIN BL17M"/>
    <property type="match status" value="1"/>
</dbReference>
<dbReference type="PANTHER" id="PTHR14413">
    <property type="entry name" value="RIBOSOMAL PROTEIN L17"/>
    <property type="match status" value="1"/>
</dbReference>
<dbReference type="Pfam" id="PF01196">
    <property type="entry name" value="Ribosomal_L17"/>
    <property type="match status" value="1"/>
</dbReference>
<dbReference type="SUPFAM" id="SSF64263">
    <property type="entry name" value="Prokaryotic ribosomal protein L17"/>
    <property type="match status" value="1"/>
</dbReference>
<name>RM17_MOUSE</name>
<organism>
    <name type="scientific">Mus musculus</name>
    <name type="common">Mouse</name>
    <dbReference type="NCBI Taxonomy" id="10090"/>
    <lineage>
        <taxon>Eukaryota</taxon>
        <taxon>Metazoa</taxon>
        <taxon>Chordata</taxon>
        <taxon>Craniata</taxon>
        <taxon>Vertebrata</taxon>
        <taxon>Euteleostomi</taxon>
        <taxon>Mammalia</taxon>
        <taxon>Eutheria</taxon>
        <taxon>Euarchontoglires</taxon>
        <taxon>Glires</taxon>
        <taxon>Rodentia</taxon>
        <taxon>Myomorpha</taxon>
        <taxon>Muroidea</taxon>
        <taxon>Muridae</taxon>
        <taxon>Murinae</taxon>
        <taxon>Mus</taxon>
        <taxon>Mus</taxon>
    </lineage>
</organism>
<gene>
    <name type="primary">Mrpl17</name>
</gene>
<evidence type="ECO:0000250" key="1">
    <source>
        <dbReference type="UniProtKB" id="Q3T0L3"/>
    </source>
</evidence>
<evidence type="ECO:0000250" key="2">
    <source>
        <dbReference type="UniProtKB" id="Q9NRX2"/>
    </source>
</evidence>
<evidence type="ECO:0000303" key="3">
    <source>
    </source>
</evidence>
<evidence type="ECO:0000305" key="4"/>
<reference key="1">
    <citation type="journal article" date="2005" name="Science">
        <title>The transcriptional landscape of the mammalian genome.</title>
        <authorList>
            <person name="Carninci P."/>
            <person name="Kasukawa T."/>
            <person name="Katayama S."/>
            <person name="Gough J."/>
            <person name="Frith M.C."/>
            <person name="Maeda N."/>
            <person name="Oyama R."/>
            <person name="Ravasi T."/>
            <person name="Lenhard B."/>
            <person name="Wells C."/>
            <person name="Kodzius R."/>
            <person name="Shimokawa K."/>
            <person name="Bajic V.B."/>
            <person name="Brenner S.E."/>
            <person name="Batalov S."/>
            <person name="Forrest A.R."/>
            <person name="Zavolan M."/>
            <person name="Davis M.J."/>
            <person name="Wilming L.G."/>
            <person name="Aidinis V."/>
            <person name="Allen J.E."/>
            <person name="Ambesi-Impiombato A."/>
            <person name="Apweiler R."/>
            <person name="Aturaliya R.N."/>
            <person name="Bailey T.L."/>
            <person name="Bansal M."/>
            <person name="Baxter L."/>
            <person name="Beisel K.W."/>
            <person name="Bersano T."/>
            <person name="Bono H."/>
            <person name="Chalk A.M."/>
            <person name="Chiu K.P."/>
            <person name="Choudhary V."/>
            <person name="Christoffels A."/>
            <person name="Clutterbuck D.R."/>
            <person name="Crowe M.L."/>
            <person name="Dalla E."/>
            <person name="Dalrymple B.P."/>
            <person name="de Bono B."/>
            <person name="Della Gatta G."/>
            <person name="di Bernardo D."/>
            <person name="Down T."/>
            <person name="Engstrom P."/>
            <person name="Fagiolini M."/>
            <person name="Faulkner G."/>
            <person name="Fletcher C.F."/>
            <person name="Fukushima T."/>
            <person name="Furuno M."/>
            <person name="Futaki S."/>
            <person name="Gariboldi M."/>
            <person name="Georgii-Hemming P."/>
            <person name="Gingeras T.R."/>
            <person name="Gojobori T."/>
            <person name="Green R.E."/>
            <person name="Gustincich S."/>
            <person name="Harbers M."/>
            <person name="Hayashi Y."/>
            <person name="Hensch T.K."/>
            <person name="Hirokawa N."/>
            <person name="Hill D."/>
            <person name="Huminiecki L."/>
            <person name="Iacono M."/>
            <person name="Ikeo K."/>
            <person name="Iwama A."/>
            <person name="Ishikawa T."/>
            <person name="Jakt M."/>
            <person name="Kanapin A."/>
            <person name="Katoh M."/>
            <person name="Kawasawa Y."/>
            <person name="Kelso J."/>
            <person name="Kitamura H."/>
            <person name="Kitano H."/>
            <person name="Kollias G."/>
            <person name="Krishnan S.P."/>
            <person name="Kruger A."/>
            <person name="Kummerfeld S.K."/>
            <person name="Kurochkin I.V."/>
            <person name="Lareau L.F."/>
            <person name="Lazarevic D."/>
            <person name="Lipovich L."/>
            <person name="Liu J."/>
            <person name="Liuni S."/>
            <person name="McWilliam S."/>
            <person name="Madan Babu M."/>
            <person name="Madera M."/>
            <person name="Marchionni L."/>
            <person name="Matsuda H."/>
            <person name="Matsuzawa S."/>
            <person name="Miki H."/>
            <person name="Mignone F."/>
            <person name="Miyake S."/>
            <person name="Morris K."/>
            <person name="Mottagui-Tabar S."/>
            <person name="Mulder N."/>
            <person name="Nakano N."/>
            <person name="Nakauchi H."/>
            <person name="Ng P."/>
            <person name="Nilsson R."/>
            <person name="Nishiguchi S."/>
            <person name="Nishikawa S."/>
            <person name="Nori F."/>
            <person name="Ohara O."/>
            <person name="Okazaki Y."/>
            <person name="Orlando V."/>
            <person name="Pang K.C."/>
            <person name="Pavan W.J."/>
            <person name="Pavesi G."/>
            <person name="Pesole G."/>
            <person name="Petrovsky N."/>
            <person name="Piazza S."/>
            <person name="Reed J."/>
            <person name="Reid J.F."/>
            <person name="Ring B.Z."/>
            <person name="Ringwald M."/>
            <person name="Rost B."/>
            <person name="Ruan Y."/>
            <person name="Salzberg S.L."/>
            <person name="Sandelin A."/>
            <person name="Schneider C."/>
            <person name="Schoenbach C."/>
            <person name="Sekiguchi K."/>
            <person name="Semple C.A."/>
            <person name="Seno S."/>
            <person name="Sessa L."/>
            <person name="Sheng Y."/>
            <person name="Shibata Y."/>
            <person name="Shimada H."/>
            <person name="Shimada K."/>
            <person name="Silva D."/>
            <person name="Sinclair B."/>
            <person name="Sperling S."/>
            <person name="Stupka E."/>
            <person name="Sugiura K."/>
            <person name="Sultana R."/>
            <person name="Takenaka Y."/>
            <person name="Taki K."/>
            <person name="Tammoja K."/>
            <person name="Tan S.L."/>
            <person name="Tang S."/>
            <person name="Taylor M.S."/>
            <person name="Tegner J."/>
            <person name="Teichmann S.A."/>
            <person name="Ueda H.R."/>
            <person name="van Nimwegen E."/>
            <person name="Verardo R."/>
            <person name="Wei C.L."/>
            <person name="Yagi K."/>
            <person name="Yamanishi H."/>
            <person name="Zabarovsky E."/>
            <person name="Zhu S."/>
            <person name="Zimmer A."/>
            <person name="Hide W."/>
            <person name="Bult C."/>
            <person name="Grimmond S.M."/>
            <person name="Teasdale R.D."/>
            <person name="Liu E.T."/>
            <person name="Brusic V."/>
            <person name="Quackenbush J."/>
            <person name="Wahlestedt C."/>
            <person name="Mattick J.S."/>
            <person name="Hume D.A."/>
            <person name="Kai C."/>
            <person name="Sasaki D."/>
            <person name="Tomaru Y."/>
            <person name="Fukuda S."/>
            <person name="Kanamori-Katayama M."/>
            <person name="Suzuki M."/>
            <person name="Aoki J."/>
            <person name="Arakawa T."/>
            <person name="Iida J."/>
            <person name="Imamura K."/>
            <person name="Itoh M."/>
            <person name="Kato T."/>
            <person name="Kawaji H."/>
            <person name="Kawagashira N."/>
            <person name="Kawashima T."/>
            <person name="Kojima M."/>
            <person name="Kondo S."/>
            <person name="Konno H."/>
            <person name="Nakano K."/>
            <person name="Ninomiya N."/>
            <person name="Nishio T."/>
            <person name="Okada M."/>
            <person name="Plessy C."/>
            <person name="Shibata K."/>
            <person name="Shiraki T."/>
            <person name="Suzuki S."/>
            <person name="Tagami M."/>
            <person name="Waki K."/>
            <person name="Watahiki A."/>
            <person name="Okamura-Oho Y."/>
            <person name="Suzuki H."/>
            <person name="Kawai J."/>
            <person name="Hayashizaki Y."/>
        </authorList>
    </citation>
    <scope>NUCLEOTIDE SEQUENCE [LARGE SCALE MRNA] (ISOFORM 1)</scope>
    <source>
        <strain>C57BL/6J</strain>
        <tissue>Pancreas</tissue>
    </source>
</reference>
<reference key="2">
    <citation type="journal article" date="2004" name="Genome Res.">
        <title>The status, quality, and expansion of the NIH full-length cDNA project: the Mammalian Gene Collection (MGC).</title>
        <authorList>
            <consortium name="The MGC Project Team"/>
        </authorList>
    </citation>
    <scope>NUCLEOTIDE SEQUENCE [LARGE SCALE MRNA] (ISOFORM 2)</scope>
    <source>
        <strain>FVB/N</strain>
        <tissue>Mammary gland</tissue>
    </source>
</reference>
<reference key="3">
    <citation type="submission" date="2009-01" db="UniProtKB">
        <authorList>
            <person name="Lubec G."/>
            <person name="Sunyer B."/>
            <person name="Chen W.-Q."/>
        </authorList>
    </citation>
    <scope>PROTEIN SEQUENCE OF 1-13</scope>
    <scope>IDENTIFICATION BY MASS SPECTROMETRY</scope>
    <source>
        <strain>OF1</strain>
        <tissue>Hippocampus</tissue>
    </source>
</reference>
<reference key="4">
    <citation type="journal article" date="2010" name="Cell">
        <title>A tissue-specific atlas of mouse protein phosphorylation and expression.</title>
        <authorList>
            <person name="Huttlin E.L."/>
            <person name="Jedrychowski M.P."/>
            <person name="Elias J.E."/>
            <person name="Goswami T."/>
            <person name="Rad R."/>
            <person name="Beausoleil S.A."/>
            <person name="Villen J."/>
            <person name="Haas W."/>
            <person name="Sowa M.E."/>
            <person name="Gygi S.P."/>
        </authorList>
    </citation>
    <scope>IDENTIFICATION BY MASS SPECTROMETRY [LARGE SCALE ANALYSIS]</scope>
    <source>
        <tissue>Liver</tissue>
    </source>
</reference>
<feature type="transit peptide" description="Mitochondrion" evidence="1">
    <location>
        <begin position="1"/>
        <end position="8"/>
    </location>
</feature>
<feature type="chain" id="PRO_0000237332" description="Large ribosomal subunit protein bL17m">
    <location>
        <begin position="9"/>
        <end position="176"/>
    </location>
</feature>
<feature type="splice variant" id="VSP_018590" description="In isoform 2." evidence="3">
    <original>EKDLIPKLFKVLAPRFQGQNGNYTRMLQIPNRKEQ</original>
    <variation>VSAPYLLVRKESLENRVPGRLKAGHSFMYQTCELP</variation>
    <location>
        <begin position="82"/>
        <end position="116"/>
    </location>
</feature>
<feature type="splice variant" id="VSP_018591" description="In isoform 2." evidence="3">
    <location>
        <begin position="117"/>
        <end position="176"/>
    </location>
</feature>
<keyword id="KW-0025">Alternative splicing</keyword>
<keyword id="KW-0903">Direct protein sequencing</keyword>
<keyword id="KW-0496">Mitochondrion</keyword>
<keyword id="KW-1185">Reference proteome</keyword>
<keyword id="KW-0687">Ribonucleoprotein</keyword>
<keyword id="KW-0689">Ribosomal protein</keyword>
<keyword id="KW-0809">Transit peptide</keyword>
<protein>
    <recommendedName>
        <fullName evidence="4">Large ribosomal subunit protein bL17m</fullName>
    </recommendedName>
    <alternativeName>
        <fullName>39S ribosomal protein L17, mitochondrial</fullName>
        <shortName>L17mt</shortName>
        <shortName>MRP-L17</shortName>
    </alternativeName>
</protein>